<organism>
    <name type="scientific">Burkholderia pseudomallei (strain 1710b)</name>
    <dbReference type="NCBI Taxonomy" id="320372"/>
    <lineage>
        <taxon>Bacteria</taxon>
        <taxon>Pseudomonadati</taxon>
        <taxon>Pseudomonadota</taxon>
        <taxon>Betaproteobacteria</taxon>
        <taxon>Burkholderiales</taxon>
        <taxon>Burkholderiaceae</taxon>
        <taxon>Burkholderia</taxon>
        <taxon>pseudomallei group</taxon>
    </lineage>
</organism>
<feature type="chain" id="PRO_0000242353" description="Large ribosomal subunit protein uL4">
    <location>
        <begin position="1"/>
        <end position="206"/>
    </location>
</feature>
<feature type="region of interest" description="Disordered" evidence="2">
    <location>
        <begin position="45"/>
        <end position="85"/>
    </location>
</feature>
<feature type="compositionally biased region" description="Basic residues" evidence="2">
    <location>
        <begin position="58"/>
        <end position="70"/>
    </location>
</feature>
<comment type="function">
    <text evidence="1">One of the primary rRNA binding proteins, this protein initially binds near the 5'-end of the 23S rRNA. It is important during the early stages of 50S assembly. It makes multiple contacts with different domains of the 23S rRNA in the assembled 50S subunit and ribosome.</text>
</comment>
<comment type="function">
    <text evidence="1">Forms part of the polypeptide exit tunnel.</text>
</comment>
<comment type="subunit">
    <text evidence="1">Part of the 50S ribosomal subunit.</text>
</comment>
<comment type="similarity">
    <text evidence="1">Belongs to the universal ribosomal protein uL4 family.</text>
</comment>
<name>RL4_BURP1</name>
<reference key="1">
    <citation type="journal article" date="2010" name="Genome Biol. Evol.">
        <title>Continuing evolution of Burkholderia mallei through genome reduction and large-scale rearrangements.</title>
        <authorList>
            <person name="Losada L."/>
            <person name="Ronning C.M."/>
            <person name="DeShazer D."/>
            <person name="Woods D."/>
            <person name="Fedorova N."/>
            <person name="Kim H.S."/>
            <person name="Shabalina S.A."/>
            <person name="Pearson T.R."/>
            <person name="Brinkac L."/>
            <person name="Tan P."/>
            <person name="Nandi T."/>
            <person name="Crabtree J."/>
            <person name="Badger J."/>
            <person name="Beckstrom-Sternberg S."/>
            <person name="Saqib M."/>
            <person name="Schutzer S.E."/>
            <person name="Keim P."/>
            <person name="Nierman W.C."/>
        </authorList>
    </citation>
    <scope>NUCLEOTIDE SEQUENCE [LARGE SCALE GENOMIC DNA]</scope>
    <source>
        <strain>1710b</strain>
    </source>
</reference>
<evidence type="ECO:0000255" key="1">
    <source>
        <dbReference type="HAMAP-Rule" id="MF_01328"/>
    </source>
</evidence>
<evidence type="ECO:0000256" key="2">
    <source>
        <dbReference type="SAM" id="MobiDB-lite"/>
    </source>
</evidence>
<evidence type="ECO:0000305" key="3"/>
<dbReference type="EMBL" id="CP000124">
    <property type="protein sequence ID" value="ABA48723.1"/>
    <property type="molecule type" value="Genomic_DNA"/>
</dbReference>
<dbReference type="RefSeq" id="WP_004199276.1">
    <property type="nucleotide sequence ID" value="NC_007434.1"/>
</dbReference>
<dbReference type="SMR" id="Q3JMR4"/>
<dbReference type="EnsemblBacteria" id="ABA48723">
    <property type="protein sequence ID" value="ABA48723"/>
    <property type="gene ID" value="BURPS1710b_3775"/>
</dbReference>
<dbReference type="GeneID" id="93061831"/>
<dbReference type="KEGG" id="bpm:BURPS1710b_3775"/>
<dbReference type="HOGENOM" id="CLU_041575_5_2_4"/>
<dbReference type="Proteomes" id="UP000002700">
    <property type="component" value="Chromosome I"/>
</dbReference>
<dbReference type="GO" id="GO:1990904">
    <property type="term" value="C:ribonucleoprotein complex"/>
    <property type="evidence" value="ECO:0007669"/>
    <property type="project" value="UniProtKB-KW"/>
</dbReference>
<dbReference type="GO" id="GO:0005840">
    <property type="term" value="C:ribosome"/>
    <property type="evidence" value="ECO:0007669"/>
    <property type="project" value="UniProtKB-KW"/>
</dbReference>
<dbReference type="GO" id="GO:0019843">
    <property type="term" value="F:rRNA binding"/>
    <property type="evidence" value="ECO:0007669"/>
    <property type="project" value="UniProtKB-UniRule"/>
</dbReference>
<dbReference type="GO" id="GO:0003735">
    <property type="term" value="F:structural constituent of ribosome"/>
    <property type="evidence" value="ECO:0007669"/>
    <property type="project" value="InterPro"/>
</dbReference>
<dbReference type="GO" id="GO:0006412">
    <property type="term" value="P:translation"/>
    <property type="evidence" value="ECO:0007669"/>
    <property type="project" value="UniProtKB-UniRule"/>
</dbReference>
<dbReference type="Gene3D" id="3.40.1370.10">
    <property type="match status" value="1"/>
</dbReference>
<dbReference type="HAMAP" id="MF_01328_B">
    <property type="entry name" value="Ribosomal_uL4_B"/>
    <property type="match status" value="1"/>
</dbReference>
<dbReference type="InterPro" id="IPR002136">
    <property type="entry name" value="Ribosomal_uL4"/>
</dbReference>
<dbReference type="InterPro" id="IPR013005">
    <property type="entry name" value="Ribosomal_uL4-like"/>
</dbReference>
<dbReference type="InterPro" id="IPR023574">
    <property type="entry name" value="Ribosomal_uL4_dom_sf"/>
</dbReference>
<dbReference type="NCBIfam" id="TIGR03953">
    <property type="entry name" value="rplD_bact"/>
    <property type="match status" value="1"/>
</dbReference>
<dbReference type="PANTHER" id="PTHR10746">
    <property type="entry name" value="50S RIBOSOMAL PROTEIN L4"/>
    <property type="match status" value="1"/>
</dbReference>
<dbReference type="PANTHER" id="PTHR10746:SF6">
    <property type="entry name" value="LARGE RIBOSOMAL SUBUNIT PROTEIN UL4M"/>
    <property type="match status" value="1"/>
</dbReference>
<dbReference type="Pfam" id="PF00573">
    <property type="entry name" value="Ribosomal_L4"/>
    <property type="match status" value="1"/>
</dbReference>
<dbReference type="SUPFAM" id="SSF52166">
    <property type="entry name" value="Ribosomal protein L4"/>
    <property type="match status" value="1"/>
</dbReference>
<keyword id="KW-0687">Ribonucleoprotein</keyword>
<keyword id="KW-0689">Ribosomal protein</keyword>
<keyword id="KW-0694">RNA-binding</keyword>
<keyword id="KW-0699">rRNA-binding</keyword>
<gene>
    <name evidence="1" type="primary">rplD</name>
    <name type="ordered locus">BURPS1710b_3775</name>
</gene>
<sequence length="206" mass="22866">MELKLLNSNGQEGAVVNASDVVFGRDYNEALIHQVVVAYQANARQGNRAQKDREQVKHTTKKPWRQKGTGRARAGMSSSPLWRGGGRIFPNSPDENFSHKVNKKMHRAGLCSIFSQLAREGRLSVVEDIVLEAPKTKLLADKFKAMGLDSVLVITDTVDENLYLASRNLPHVAVVEPRYADPLSLIYFKKVLVTKAAVAQIEELLS</sequence>
<accession>Q3JMR4</accession>
<protein>
    <recommendedName>
        <fullName evidence="1">Large ribosomal subunit protein uL4</fullName>
    </recommendedName>
    <alternativeName>
        <fullName evidence="3">50S ribosomal protein L4</fullName>
    </alternativeName>
</protein>
<proteinExistence type="inferred from homology"/>